<protein>
    <recommendedName>
        <fullName evidence="1">Trans-aconitate 2-methyltransferase</fullName>
        <ecNumber evidence="1">2.1.1.144</ecNumber>
    </recommendedName>
</protein>
<organism>
    <name type="scientific">Mycobacterium tuberculosis (strain ATCC 25177 / H37Ra)</name>
    <dbReference type="NCBI Taxonomy" id="419947"/>
    <lineage>
        <taxon>Bacteria</taxon>
        <taxon>Bacillati</taxon>
        <taxon>Actinomycetota</taxon>
        <taxon>Actinomycetes</taxon>
        <taxon>Mycobacteriales</taxon>
        <taxon>Mycobacteriaceae</taxon>
        <taxon>Mycobacterium</taxon>
        <taxon>Mycobacterium tuberculosis complex</taxon>
    </lineage>
</organism>
<evidence type="ECO:0000255" key="1">
    <source>
        <dbReference type="HAMAP-Rule" id="MF_00560"/>
    </source>
</evidence>
<accession>A5TZ21</accession>
<reference key="1">
    <citation type="journal article" date="2008" name="PLoS ONE">
        <title>Genetic basis of virulence attenuation revealed by comparative genomic analysis of Mycobacterium tuberculosis strain H37Ra versus H37Rv.</title>
        <authorList>
            <person name="Zheng H."/>
            <person name="Lu L."/>
            <person name="Wang B."/>
            <person name="Pu S."/>
            <person name="Zhang X."/>
            <person name="Zhu G."/>
            <person name="Shi W."/>
            <person name="Zhang L."/>
            <person name="Wang H."/>
            <person name="Wang S."/>
            <person name="Zhao G."/>
            <person name="Zhang Y."/>
        </authorList>
    </citation>
    <scope>NUCLEOTIDE SEQUENCE [LARGE SCALE GENOMIC DNA]</scope>
    <source>
        <strain>ATCC 25177 / H37Ra</strain>
    </source>
</reference>
<gene>
    <name evidence="1" type="primary">tam</name>
    <name type="ordered locus">MRA_0303</name>
</gene>
<comment type="function">
    <text evidence="1">Catalyzes the S-adenosylmethionine monomethyl esterification of trans-aconitate.</text>
</comment>
<comment type="catalytic activity">
    <reaction evidence="1">
        <text>trans-aconitate + S-adenosyl-L-methionine = (E)-3-(methoxycarbonyl)pent-2-enedioate + S-adenosyl-L-homocysteine</text>
        <dbReference type="Rhea" id="RHEA:14969"/>
        <dbReference type="ChEBI" id="CHEBI:15708"/>
        <dbReference type="ChEBI" id="CHEBI:57470"/>
        <dbReference type="ChEBI" id="CHEBI:57856"/>
        <dbReference type="ChEBI" id="CHEBI:59789"/>
        <dbReference type="EC" id="2.1.1.144"/>
    </reaction>
</comment>
<comment type="subcellular location">
    <subcellularLocation>
        <location evidence="1">Cytoplasm</location>
    </subcellularLocation>
</comment>
<comment type="similarity">
    <text evidence="1">Belongs to the methyltransferase superfamily. Tam family.</text>
</comment>
<feature type="chain" id="PRO_1000056565" description="Trans-aconitate 2-methyltransferase">
    <location>
        <begin position="1"/>
        <end position="261"/>
    </location>
</feature>
<proteinExistence type="inferred from homology"/>
<sequence>MWDPDVYLAFSGHRNRPFYELVSRVGLERARRVVDLGCGPGHLTRYLARRWPGAVIEALDSSPEMVAAAAERGIDATTGDLRDWKPKPDTDVVVSNAALHWVPEHSDLLVRWVDELAPGSWIAVQIPGNFETPSHAAVRALARREPYAKLMRDIPFRVGAVVQSPAYYAELLMDTGCKVDVWETTYLHQLTGEHPVLDWITGSALVPVRERLSDESWQQFRQELIPLLNDAYPPRADGSTIFPFRRLFMVAEVGGARRSGG</sequence>
<keyword id="KW-0963">Cytoplasm</keyword>
<keyword id="KW-0489">Methyltransferase</keyword>
<keyword id="KW-1185">Reference proteome</keyword>
<keyword id="KW-0949">S-adenosyl-L-methionine</keyword>
<keyword id="KW-0808">Transferase</keyword>
<name>TAM_MYCTA</name>
<dbReference type="EC" id="2.1.1.144" evidence="1"/>
<dbReference type="EMBL" id="CP000611">
    <property type="protein sequence ID" value="ABQ72021.1"/>
    <property type="molecule type" value="Genomic_DNA"/>
</dbReference>
<dbReference type="RefSeq" id="WP_003401538.1">
    <property type="nucleotide sequence ID" value="NZ_CP016972.1"/>
</dbReference>
<dbReference type="SMR" id="A5TZ21"/>
<dbReference type="KEGG" id="mra:MRA_0303"/>
<dbReference type="eggNOG" id="COG4106">
    <property type="taxonomic scope" value="Bacteria"/>
</dbReference>
<dbReference type="HOGENOM" id="CLU_037990_5_2_11"/>
<dbReference type="Proteomes" id="UP000001988">
    <property type="component" value="Chromosome"/>
</dbReference>
<dbReference type="GO" id="GO:0005737">
    <property type="term" value="C:cytoplasm"/>
    <property type="evidence" value="ECO:0007669"/>
    <property type="project" value="UniProtKB-SubCell"/>
</dbReference>
<dbReference type="GO" id="GO:0030798">
    <property type="term" value="F:trans-aconitate 2-methyltransferase activity"/>
    <property type="evidence" value="ECO:0007669"/>
    <property type="project" value="UniProtKB-UniRule"/>
</dbReference>
<dbReference type="GO" id="GO:0032259">
    <property type="term" value="P:methylation"/>
    <property type="evidence" value="ECO:0007669"/>
    <property type="project" value="UniProtKB-KW"/>
</dbReference>
<dbReference type="CDD" id="cd02440">
    <property type="entry name" value="AdoMet_MTases"/>
    <property type="match status" value="1"/>
</dbReference>
<dbReference type="Gene3D" id="1.10.150.290">
    <property type="entry name" value="S-adenosyl-L-methionine-dependent methyltransferases"/>
    <property type="match status" value="1"/>
</dbReference>
<dbReference type="Gene3D" id="3.40.50.150">
    <property type="entry name" value="Vaccinia Virus protein VP39"/>
    <property type="match status" value="1"/>
</dbReference>
<dbReference type="HAMAP" id="MF_00560">
    <property type="entry name" value="Tran_acon_Me_trans"/>
    <property type="match status" value="1"/>
</dbReference>
<dbReference type="InterPro" id="IPR041698">
    <property type="entry name" value="Methyltransf_25"/>
</dbReference>
<dbReference type="InterPro" id="IPR029063">
    <property type="entry name" value="SAM-dependent_MTases_sf"/>
</dbReference>
<dbReference type="InterPro" id="IPR023506">
    <property type="entry name" value="Trans-aconitate_MeTrfase"/>
</dbReference>
<dbReference type="InterPro" id="IPR023149">
    <property type="entry name" value="Trans_acon_MeTrfase_C"/>
</dbReference>
<dbReference type="NCBIfam" id="NF010703">
    <property type="entry name" value="PRK14103.1"/>
    <property type="match status" value="1"/>
</dbReference>
<dbReference type="PANTHER" id="PTHR43861:SF1">
    <property type="entry name" value="TRANS-ACONITATE 2-METHYLTRANSFERASE"/>
    <property type="match status" value="1"/>
</dbReference>
<dbReference type="PANTHER" id="PTHR43861">
    <property type="entry name" value="TRANS-ACONITATE 2-METHYLTRANSFERASE-RELATED"/>
    <property type="match status" value="1"/>
</dbReference>
<dbReference type="Pfam" id="PF13649">
    <property type="entry name" value="Methyltransf_25"/>
    <property type="match status" value="1"/>
</dbReference>
<dbReference type="SUPFAM" id="SSF53335">
    <property type="entry name" value="S-adenosyl-L-methionine-dependent methyltransferases"/>
    <property type="match status" value="1"/>
</dbReference>